<proteinExistence type="evidence at protein level"/>
<protein>
    <recommendedName>
        <fullName>Phospholipase A(1) LCAT3</fullName>
        <ecNumber>3.1.1.32</ecNumber>
    </recommendedName>
    <alternativeName>
        <fullName>Lecithin-cholesterol acyltransferase-like 3</fullName>
    </alternativeName>
</protein>
<accession>Q93V61</accession>
<accession>Q9SRN5</accession>
<keyword id="KW-0256">Endoplasmic reticulum</keyword>
<keyword id="KW-0378">Hydrolase</keyword>
<keyword id="KW-0442">Lipid degradation</keyword>
<keyword id="KW-0443">Lipid metabolism</keyword>
<keyword id="KW-0472">Membrane</keyword>
<keyword id="KW-0492">Microsome</keyword>
<keyword id="KW-1185">Reference proteome</keyword>
<reference key="1">
    <citation type="journal article" date="2004" name="Eur. J. Biochem.">
        <title>Expression in yeast of a novel phospholipase A1 cDNA from Arabidopsis thaliana.</title>
        <authorList>
            <person name="Noiriel A."/>
            <person name="Benveniste P."/>
            <person name="Banas A."/>
            <person name="Stymne S."/>
            <person name="Bouvier-Nave P."/>
        </authorList>
    </citation>
    <scope>NUCLEOTIDE SEQUENCE [MRNA]</scope>
    <scope>MUTAGENESIS OF SER-177; TYR-346; THR-352; ASP-384 AND HIS-409</scope>
    <scope>SUBCELLULAR LOCATION</scope>
    <scope>BIOPHYSICOCHEMICAL PROPERTIES</scope>
    <scope>FUNCTION</scope>
</reference>
<reference key="2">
    <citation type="journal article" date="2000" name="Nature">
        <title>Sequence and analysis of chromosome 3 of the plant Arabidopsis thaliana.</title>
        <authorList>
            <person name="Salanoubat M."/>
            <person name="Lemcke K."/>
            <person name="Rieger M."/>
            <person name="Ansorge W."/>
            <person name="Unseld M."/>
            <person name="Fartmann B."/>
            <person name="Valle G."/>
            <person name="Bloecker H."/>
            <person name="Perez-Alonso M."/>
            <person name="Obermaier B."/>
            <person name="Delseny M."/>
            <person name="Boutry M."/>
            <person name="Grivell L.A."/>
            <person name="Mache R."/>
            <person name="Puigdomenech P."/>
            <person name="De Simone V."/>
            <person name="Choisne N."/>
            <person name="Artiguenave F."/>
            <person name="Robert C."/>
            <person name="Brottier P."/>
            <person name="Wincker P."/>
            <person name="Cattolico L."/>
            <person name="Weissenbach J."/>
            <person name="Saurin W."/>
            <person name="Quetier F."/>
            <person name="Schaefer M."/>
            <person name="Mueller-Auer S."/>
            <person name="Gabel C."/>
            <person name="Fuchs M."/>
            <person name="Benes V."/>
            <person name="Wurmbach E."/>
            <person name="Drzonek H."/>
            <person name="Erfle H."/>
            <person name="Jordan N."/>
            <person name="Bangert S."/>
            <person name="Wiedelmann R."/>
            <person name="Kranz H."/>
            <person name="Voss H."/>
            <person name="Holland R."/>
            <person name="Brandt P."/>
            <person name="Nyakatura G."/>
            <person name="Vezzi A."/>
            <person name="D'Angelo M."/>
            <person name="Pallavicini A."/>
            <person name="Toppo S."/>
            <person name="Simionati B."/>
            <person name="Conrad A."/>
            <person name="Hornischer K."/>
            <person name="Kauer G."/>
            <person name="Loehnert T.-H."/>
            <person name="Nordsiek G."/>
            <person name="Reichelt J."/>
            <person name="Scharfe M."/>
            <person name="Schoen O."/>
            <person name="Bargues M."/>
            <person name="Terol J."/>
            <person name="Climent J."/>
            <person name="Navarro P."/>
            <person name="Collado C."/>
            <person name="Perez-Perez A."/>
            <person name="Ottenwaelder B."/>
            <person name="Duchemin D."/>
            <person name="Cooke R."/>
            <person name="Laudie M."/>
            <person name="Berger-Llauro C."/>
            <person name="Purnelle B."/>
            <person name="Masuy D."/>
            <person name="de Haan M."/>
            <person name="Maarse A.C."/>
            <person name="Alcaraz J.-P."/>
            <person name="Cottet A."/>
            <person name="Casacuberta E."/>
            <person name="Monfort A."/>
            <person name="Argiriou A."/>
            <person name="Flores M."/>
            <person name="Liguori R."/>
            <person name="Vitale D."/>
            <person name="Mannhaupt G."/>
            <person name="Haase D."/>
            <person name="Schoof H."/>
            <person name="Rudd S."/>
            <person name="Zaccaria P."/>
            <person name="Mewes H.-W."/>
            <person name="Mayer K.F.X."/>
            <person name="Kaul S."/>
            <person name="Town C.D."/>
            <person name="Koo H.L."/>
            <person name="Tallon L.J."/>
            <person name="Jenkins J."/>
            <person name="Rooney T."/>
            <person name="Rizzo M."/>
            <person name="Walts A."/>
            <person name="Utterback T."/>
            <person name="Fujii C.Y."/>
            <person name="Shea T.P."/>
            <person name="Creasy T.H."/>
            <person name="Haas B."/>
            <person name="Maiti R."/>
            <person name="Wu D."/>
            <person name="Peterson J."/>
            <person name="Van Aken S."/>
            <person name="Pai G."/>
            <person name="Militscher J."/>
            <person name="Sellers P."/>
            <person name="Gill J.E."/>
            <person name="Feldblyum T.V."/>
            <person name="Preuss D."/>
            <person name="Lin X."/>
            <person name="Nierman W.C."/>
            <person name="Salzberg S.L."/>
            <person name="White O."/>
            <person name="Venter J.C."/>
            <person name="Fraser C.M."/>
            <person name="Kaneko T."/>
            <person name="Nakamura Y."/>
            <person name="Sato S."/>
            <person name="Kato T."/>
            <person name="Asamizu E."/>
            <person name="Sasamoto S."/>
            <person name="Kimura T."/>
            <person name="Idesawa K."/>
            <person name="Kawashima K."/>
            <person name="Kishida Y."/>
            <person name="Kiyokawa C."/>
            <person name="Kohara M."/>
            <person name="Matsumoto M."/>
            <person name="Matsuno A."/>
            <person name="Muraki A."/>
            <person name="Nakayama S."/>
            <person name="Nakazaki N."/>
            <person name="Shinpo S."/>
            <person name="Takeuchi C."/>
            <person name="Wada T."/>
            <person name="Watanabe A."/>
            <person name="Yamada M."/>
            <person name="Yasuda M."/>
            <person name="Tabata S."/>
        </authorList>
    </citation>
    <scope>NUCLEOTIDE SEQUENCE [LARGE SCALE GENOMIC DNA]</scope>
    <source>
        <strain>cv. Columbia</strain>
    </source>
</reference>
<reference key="3">
    <citation type="journal article" date="2017" name="Plant J.">
        <title>Araport11: a complete reannotation of the Arabidopsis thaliana reference genome.</title>
        <authorList>
            <person name="Cheng C.Y."/>
            <person name="Krishnakumar V."/>
            <person name="Chan A.P."/>
            <person name="Thibaud-Nissen F."/>
            <person name="Schobel S."/>
            <person name="Town C.D."/>
        </authorList>
    </citation>
    <scope>GENOME REANNOTATION</scope>
    <source>
        <strain>cv. Columbia</strain>
    </source>
</reference>
<reference key="4">
    <citation type="journal article" date="2003" name="Science">
        <title>Empirical analysis of transcriptional activity in the Arabidopsis genome.</title>
        <authorList>
            <person name="Yamada K."/>
            <person name="Lim J."/>
            <person name="Dale J.M."/>
            <person name="Chen H."/>
            <person name="Shinn P."/>
            <person name="Palm C.J."/>
            <person name="Southwick A.M."/>
            <person name="Wu H.C."/>
            <person name="Kim C.J."/>
            <person name="Nguyen M."/>
            <person name="Pham P.K."/>
            <person name="Cheuk R.F."/>
            <person name="Karlin-Newmann G."/>
            <person name="Liu S.X."/>
            <person name="Lam B."/>
            <person name="Sakano H."/>
            <person name="Wu T."/>
            <person name="Yu G."/>
            <person name="Miranda M."/>
            <person name="Quach H.L."/>
            <person name="Tripp M."/>
            <person name="Chang C.H."/>
            <person name="Lee J.M."/>
            <person name="Toriumi M.J."/>
            <person name="Chan M.M."/>
            <person name="Tang C.C."/>
            <person name="Onodera C.S."/>
            <person name="Deng J.M."/>
            <person name="Akiyama K."/>
            <person name="Ansari Y."/>
            <person name="Arakawa T."/>
            <person name="Banh J."/>
            <person name="Banno F."/>
            <person name="Bowser L."/>
            <person name="Brooks S.Y."/>
            <person name="Carninci P."/>
            <person name="Chao Q."/>
            <person name="Choy N."/>
            <person name="Enju A."/>
            <person name="Goldsmith A.D."/>
            <person name="Gurjal M."/>
            <person name="Hansen N.F."/>
            <person name="Hayashizaki Y."/>
            <person name="Johnson-Hopson C."/>
            <person name="Hsuan V.W."/>
            <person name="Iida K."/>
            <person name="Karnes M."/>
            <person name="Khan S."/>
            <person name="Koesema E."/>
            <person name="Ishida J."/>
            <person name="Jiang P.X."/>
            <person name="Jones T."/>
            <person name="Kawai J."/>
            <person name="Kamiya A."/>
            <person name="Meyers C."/>
            <person name="Nakajima M."/>
            <person name="Narusaka M."/>
            <person name="Seki M."/>
            <person name="Sakurai T."/>
            <person name="Satou M."/>
            <person name="Tamse R."/>
            <person name="Vaysberg M."/>
            <person name="Wallender E.K."/>
            <person name="Wong C."/>
            <person name="Yamamura Y."/>
            <person name="Yuan S."/>
            <person name="Shinozaki K."/>
            <person name="Davis R.W."/>
            <person name="Theologis A."/>
            <person name="Ecker J.R."/>
        </authorList>
    </citation>
    <scope>NUCLEOTIDE SEQUENCE [LARGE SCALE MRNA]</scope>
    <source>
        <strain>cv. Columbia</strain>
    </source>
</reference>
<organism>
    <name type="scientific">Arabidopsis thaliana</name>
    <name type="common">Mouse-ear cress</name>
    <dbReference type="NCBI Taxonomy" id="3702"/>
    <lineage>
        <taxon>Eukaryota</taxon>
        <taxon>Viridiplantae</taxon>
        <taxon>Streptophyta</taxon>
        <taxon>Embryophyta</taxon>
        <taxon>Tracheophyta</taxon>
        <taxon>Spermatophyta</taxon>
        <taxon>Magnoliopsida</taxon>
        <taxon>eudicotyledons</taxon>
        <taxon>Gunneridae</taxon>
        <taxon>Pentapetalae</taxon>
        <taxon>rosids</taxon>
        <taxon>malvids</taxon>
        <taxon>Brassicales</taxon>
        <taxon>Brassicaceae</taxon>
        <taxon>Camelineae</taxon>
        <taxon>Arabidopsis</taxon>
    </lineage>
</organism>
<comment type="function">
    <text evidence="1">Hydrolyzes the sn-1 acylester bond of phospholipids. Phosphatidylcholine, phosphatidylethanolamine and phosphatidic acid can be used as substrates. Weak activity with lysophosphatidylcholine and no activity with tripalmitoylglycerol and cholesteryl oleate. Seems to have a preference for unsaturated fatty acids at the sn-1 position.</text>
</comment>
<comment type="catalytic activity">
    <reaction>
        <text>a 1,2-diacyl-sn-glycero-3-phosphocholine + H2O = a 2-acyl-sn-glycero-3-phosphocholine + a fatty acid + H(+)</text>
        <dbReference type="Rhea" id="RHEA:18689"/>
        <dbReference type="ChEBI" id="CHEBI:15377"/>
        <dbReference type="ChEBI" id="CHEBI:15378"/>
        <dbReference type="ChEBI" id="CHEBI:28868"/>
        <dbReference type="ChEBI" id="CHEBI:57643"/>
        <dbReference type="ChEBI" id="CHEBI:57875"/>
        <dbReference type="EC" id="3.1.1.32"/>
    </reaction>
</comment>
<comment type="biophysicochemical properties">
    <phDependence>
        <text evidence="1">Optimum pH is 6.0-6.5.</text>
    </phDependence>
    <temperatureDependence>
        <text evidence="1">Optimum temperature is 60 to 65 degrees Celsius.</text>
    </temperatureDependence>
</comment>
<comment type="subcellular location">
    <subcellularLocation>
        <location evidence="1">Microsome membrane</location>
        <topology evidence="1">Peripheral membrane protein</topology>
    </subcellularLocation>
</comment>
<comment type="miscellaneous">
    <text>Unaffected by calcium.</text>
</comment>
<comment type="similarity">
    <text evidence="2">Belongs to the AB hydrolase superfamily. Lipase family.</text>
</comment>
<comment type="sequence caution" evidence="2">
    <conflict type="erroneous gene model prediction">
        <sequence resource="EMBL-CDS" id="AAF01599"/>
    </conflict>
</comment>
<sequence length="447" mass="50349">MGWIPCPCWGTNDDENAGEVADRDPVLLVSGIGGSILHSKKKNSKSEIRVWVRIFLANLAFKQSLWSLYNPKTGYTEPLDDNIEVLVPDDDHGLYAIDILDPSWFVKLCHLTEVYHFHDMIEMLVGCGYKKGTTLFGYGYDFRQSNRIDLLILGLKKKLETAYKRSGGRKVTIISHSMGGLMVSCFMYLHPEAFSKYVNKWITIATPFQGAPGCINDSILTGVQFVEGLESFFFVSRWTMHQLLVECPSIYEMMANPDFKWKKQPEIRVWRKKSENDVDTSVELESFGLIESIDLFNDALKNNELSYGGNKIALPFNFAILDWAAKTREILNKAQLPDGVSFYNIYGVSLNTPFDVCYGTETSPIDDLSEICQTMPEYTYVDGDGTVPAESAAAAQFKAVASVGVSGSHRGLLRDERVFELIQQWLGVEPKKAKRKHLRTHKVVDSG</sequence>
<feature type="chain" id="PRO_0000398821" description="Phospholipase A(1) LCAT3">
    <location>
        <begin position="1"/>
        <end position="447"/>
    </location>
</feature>
<feature type="active site" description="Acyl-ester intermediate" evidence="2">
    <location>
        <position position="177"/>
    </location>
</feature>
<feature type="active site" description="Charge relay system" evidence="2">
    <location>
        <position position="384"/>
    </location>
</feature>
<feature type="active site" description="Charge relay system" evidence="2">
    <location>
        <position position="409"/>
    </location>
</feature>
<feature type="mutagenesis site" description="Loss of activity." evidence="1">
    <original>S</original>
    <variation>A</variation>
    <location>
        <position position="177"/>
    </location>
</feature>
<feature type="mutagenesis site" description="Decreased activity." evidence="1">
    <original>Y</original>
    <variation>F</variation>
    <location>
        <position position="346"/>
    </location>
</feature>
<feature type="mutagenesis site" description="Decreased activity." evidence="1">
    <original>T</original>
    <variation>A</variation>
    <location>
        <position position="352"/>
    </location>
</feature>
<feature type="mutagenesis site" description="Loss of activity." evidence="1">
    <original>D</original>
    <variation>A</variation>
    <location>
        <position position="384"/>
    </location>
</feature>
<feature type="mutagenesis site" description="Loss of activity." evidence="1">
    <original>H</original>
    <variation>L</variation>
    <location>
        <position position="409"/>
    </location>
</feature>
<gene>
    <name type="primary">LCAT3</name>
    <name type="ordered locus">At3g03310</name>
    <name type="ORF">T21P5.27</name>
</gene>
<name>LCAT3_ARATH</name>
<dbReference type="EC" id="3.1.1.32"/>
<dbReference type="EMBL" id="AF421148">
    <property type="protein sequence ID" value="AAQ04051.1"/>
    <property type="molecule type" value="mRNA"/>
</dbReference>
<dbReference type="EMBL" id="AC009895">
    <property type="protein sequence ID" value="AAF01599.1"/>
    <property type="status" value="ALT_SEQ"/>
    <property type="molecule type" value="Genomic_DNA"/>
</dbReference>
<dbReference type="EMBL" id="CP002686">
    <property type="protein sequence ID" value="AEE73928.1"/>
    <property type="molecule type" value="Genomic_DNA"/>
</dbReference>
<dbReference type="EMBL" id="AY054239">
    <property type="protein sequence ID" value="AAL06898.1"/>
    <property type="molecule type" value="mRNA"/>
</dbReference>
<dbReference type="EMBL" id="AY056414">
    <property type="protein sequence ID" value="AAL08270.1"/>
    <property type="molecule type" value="mRNA"/>
</dbReference>
<dbReference type="EMBL" id="AY113174">
    <property type="protein sequence ID" value="AAM47477.1"/>
    <property type="molecule type" value="mRNA"/>
</dbReference>
<dbReference type="RefSeq" id="NP_566201.1">
    <property type="nucleotide sequence ID" value="NM_111202.4"/>
</dbReference>
<dbReference type="SMR" id="Q93V61"/>
<dbReference type="FunCoup" id="Q93V61">
    <property type="interactions" value="357"/>
</dbReference>
<dbReference type="STRING" id="3702.Q93V61"/>
<dbReference type="ESTHER" id="arath-LCAT3">
    <property type="family name" value="PC-sterol_acyltransferase"/>
</dbReference>
<dbReference type="PaxDb" id="3702-AT3G03310.1"/>
<dbReference type="ProteomicsDB" id="237128"/>
<dbReference type="EnsemblPlants" id="AT3G03310.1">
    <property type="protein sequence ID" value="AT3G03310.1"/>
    <property type="gene ID" value="AT3G03310"/>
</dbReference>
<dbReference type="GeneID" id="821286"/>
<dbReference type="Gramene" id="AT3G03310.1">
    <property type="protein sequence ID" value="AT3G03310.1"/>
    <property type="gene ID" value="AT3G03310"/>
</dbReference>
<dbReference type="KEGG" id="ath:AT3G03310"/>
<dbReference type="Araport" id="AT3G03310"/>
<dbReference type="TAIR" id="AT3G03310">
    <property type="gene designation" value="LCAT3"/>
</dbReference>
<dbReference type="eggNOG" id="KOG2369">
    <property type="taxonomic scope" value="Eukaryota"/>
</dbReference>
<dbReference type="HOGENOM" id="CLU_035096_0_0_1"/>
<dbReference type="InParanoid" id="Q93V61"/>
<dbReference type="OMA" id="MIDMLVK"/>
<dbReference type="OrthoDB" id="190846at2759"/>
<dbReference type="PhylomeDB" id="Q93V61"/>
<dbReference type="BioCyc" id="ARA:AT3G03310-MONOMER"/>
<dbReference type="BioCyc" id="MetaCyc:AT3G03301-MONOMER"/>
<dbReference type="BRENDA" id="3.1.1.32">
    <property type="organism ID" value="399"/>
</dbReference>
<dbReference type="PRO" id="PR:Q93V61"/>
<dbReference type="Proteomes" id="UP000006548">
    <property type="component" value="Chromosome 3"/>
</dbReference>
<dbReference type="ExpressionAtlas" id="Q93V61">
    <property type="expression patterns" value="baseline and differential"/>
</dbReference>
<dbReference type="GO" id="GO:0005783">
    <property type="term" value="C:endoplasmic reticulum"/>
    <property type="evidence" value="ECO:0007669"/>
    <property type="project" value="UniProtKB-KW"/>
</dbReference>
<dbReference type="GO" id="GO:0016020">
    <property type="term" value="C:membrane"/>
    <property type="evidence" value="ECO:0007669"/>
    <property type="project" value="UniProtKB-KW"/>
</dbReference>
<dbReference type="GO" id="GO:0008374">
    <property type="term" value="F:O-acyltransferase activity"/>
    <property type="evidence" value="ECO:0007669"/>
    <property type="project" value="InterPro"/>
</dbReference>
<dbReference type="GO" id="GO:0008970">
    <property type="term" value="F:phospholipase A1 activity"/>
    <property type="evidence" value="ECO:0007669"/>
    <property type="project" value="UniProtKB-EC"/>
</dbReference>
<dbReference type="GO" id="GO:0016042">
    <property type="term" value="P:lipid catabolic process"/>
    <property type="evidence" value="ECO:0007669"/>
    <property type="project" value="UniProtKB-KW"/>
</dbReference>
<dbReference type="Gene3D" id="3.40.50.1820">
    <property type="entry name" value="alpha/beta hydrolase"/>
    <property type="match status" value="1"/>
</dbReference>
<dbReference type="InterPro" id="IPR029058">
    <property type="entry name" value="AB_hydrolase_fold"/>
</dbReference>
<dbReference type="InterPro" id="IPR003386">
    <property type="entry name" value="LACT/PDAT_acylTrfase"/>
</dbReference>
<dbReference type="PANTHER" id="PTHR11440">
    <property type="entry name" value="LECITHIN-CHOLESTEROL ACYLTRANSFERASE-RELATED"/>
    <property type="match status" value="1"/>
</dbReference>
<dbReference type="Pfam" id="PF02450">
    <property type="entry name" value="LCAT"/>
    <property type="match status" value="1"/>
</dbReference>
<dbReference type="SUPFAM" id="SSF53474">
    <property type="entry name" value="alpha/beta-Hydrolases"/>
    <property type="match status" value="1"/>
</dbReference>
<evidence type="ECO:0000269" key="1">
    <source>
    </source>
</evidence>
<evidence type="ECO:0000305" key="2"/>